<keyword id="KW-0687">Ribonucleoprotein</keyword>
<keyword id="KW-0689">Ribosomal protein</keyword>
<organism>
    <name type="scientific">Francisella tularensis subsp. tularensis (strain WY96-3418)</name>
    <dbReference type="NCBI Taxonomy" id="418136"/>
    <lineage>
        <taxon>Bacteria</taxon>
        <taxon>Pseudomonadati</taxon>
        <taxon>Pseudomonadota</taxon>
        <taxon>Gammaproteobacteria</taxon>
        <taxon>Thiotrichales</taxon>
        <taxon>Francisellaceae</taxon>
        <taxon>Francisella</taxon>
    </lineage>
</organism>
<evidence type="ECO:0000255" key="1">
    <source>
        <dbReference type="HAMAP-Rule" id="MF_00294"/>
    </source>
</evidence>
<evidence type="ECO:0000305" key="2"/>
<feature type="chain" id="PRO_0000356469" description="Large ribosomal subunit protein bL33">
    <location>
        <begin position="1"/>
        <end position="51"/>
    </location>
</feature>
<sequence>MREKIRLVSSAKTGHFYTTTKNKKEMPNKMEIKKYDPVVRKHVMYKEAKIK</sequence>
<name>RL33_FRATW</name>
<dbReference type="EMBL" id="CP000608">
    <property type="protein sequence ID" value="ABO46278.1"/>
    <property type="molecule type" value="Genomic_DNA"/>
</dbReference>
<dbReference type="RefSeq" id="WP_003014820.1">
    <property type="nucleotide sequence ID" value="NC_009257.1"/>
</dbReference>
<dbReference type="SMR" id="A4IWH6"/>
<dbReference type="GeneID" id="75264166"/>
<dbReference type="KEGG" id="ftw:FTW_0330"/>
<dbReference type="HOGENOM" id="CLU_190949_1_1_6"/>
<dbReference type="GO" id="GO:0022625">
    <property type="term" value="C:cytosolic large ribosomal subunit"/>
    <property type="evidence" value="ECO:0007669"/>
    <property type="project" value="TreeGrafter"/>
</dbReference>
<dbReference type="GO" id="GO:0003735">
    <property type="term" value="F:structural constituent of ribosome"/>
    <property type="evidence" value="ECO:0007669"/>
    <property type="project" value="InterPro"/>
</dbReference>
<dbReference type="GO" id="GO:0006412">
    <property type="term" value="P:translation"/>
    <property type="evidence" value="ECO:0007669"/>
    <property type="project" value="UniProtKB-UniRule"/>
</dbReference>
<dbReference type="FunFam" id="2.20.28.120:FF:000001">
    <property type="entry name" value="50S ribosomal protein L33"/>
    <property type="match status" value="1"/>
</dbReference>
<dbReference type="Gene3D" id="2.20.28.120">
    <property type="entry name" value="Ribosomal protein L33"/>
    <property type="match status" value="1"/>
</dbReference>
<dbReference type="HAMAP" id="MF_00294">
    <property type="entry name" value="Ribosomal_bL33"/>
    <property type="match status" value="1"/>
</dbReference>
<dbReference type="InterPro" id="IPR001705">
    <property type="entry name" value="Ribosomal_bL33"/>
</dbReference>
<dbReference type="InterPro" id="IPR018264">
    <property type="entry name" value="Ribosomal_bL33_CS"/>
</dbReference>
<dbReference type="InterPro" id="IPR038584">
    <property type="entry name" value="Ribosomal_bL33_sf"/>
</dbReference>
<dbReference type="InterPro" id="IPR011332">
    <property type="entry name" value="Ribosomal_zn-bd"/>
</dbReference>
<dbReference type="NCBIfam" id="NF001860">
    <property type="entry name" value="PRK00595.1"/>
    <property type="match status" value="1"/>
</dbReference>
<dbReference type="NCBIfam" id="TIGR01023">
    <property type="entry name" value="rpmG_bact"/>
    <property type="match status" value="1"/>
</dbReference>
<dbReference type="PANTHER" id="PTHR15238">
    <property type="entry name" value="54S RIBOSOMAL PROTEIN L39, MITOCHONDRIAL"/>
    <property type="match status" value="1"/>
</dbReference>
<dbReference type="PANTHER" id="PTHR15238:SF1">
    <property type="entry name" value="LARGE RIBOSOMAL SUBUNIT PROTEIN BL33M"/>
    <property type="match status" value="1"/>
</dbReference>
<dbReference type="Pfam" id="PF00471">
    <property type="entry name" value="Ribosomal_L33"/>
    <property type="match status" value="1"/>
</dbReference>
<dbReference type="SUPFAM" id="SSF57829">
    <property type="entry name" value="Zn-binding ribosomal proteins"/>
    <property type="match status" value="1"/>
</dbReference>
<dbReference type="PROSITE" id="PS00582">
    <property type="entry name" value="RIBOSOMAL_L33"/>
    <property type="match status" value="1"/>
</dbReference>
<accession>A4IWH6</accession>
<proteinExistence type="inferred from homology"/>
<comment type="similarity">
    <text evidence="1">Belongs to the bacterial ribosomal protein bL33 family.</text>
</comment>
<reference key="1">
    <citation type="journal article" date="2007" name="PLoS ONE">
        <title>Complete genomic characterization of a pathogenic A.II strain of Francisella tularensis subspecies tularensis.</title>
        <authorList>
            <person name="Beckstrom-Sternberg S.M."/>
            <person name="Auerbach R.K."/>
            <person name="Godbole S."/>
            <person name="Pearson J.V."/>
            <person name="Beckstrom-Sternberg J.S."/>
            <person name="Deng Z."/>
            <person name="Munk C."/>
            <person name="Kubota K."/>
            <person name="Zhou Y."/>
            <person name="Bruce D."/>
            <person name="Noronha J."/>
            <person name="Scheuermann R.H."/>
            <person name="Wang A."/>
            <person name="Wei X."/>
            <person name="Wang J."/>
            <person name="Hao J."/>
            <person name="Wagner D.M."/>
            <person name="Brettin T.S."/>
            <person name="Brown N."/>
            <person name="Gilna P."/>
            <person name="Keim P.S."/>
        </authorList>
    </citation>
    <scope>NUCLEOTIDE SEQUENCE [LARGE SCALE GENOMIC DNA]</scope>
    <source>
        <strain>WY96-3418</strain>
    </source>
</reference>
<gene>
    <name evidence="1" type="primary">rpmG</name>
    <name type="ordered locus">FTW_0330</name>
</gene>
<protein>
    <recommendedName>
        <fullName evidence="1">Large ribosomal subunit protein bL33</fullName>
    </recommendedName>
    <alternativeName>
        <fullName evidence="2">50S ribosomal protein L33</fullName>
    </alternativeName>
</protein>